<reference key="1">
    <citation type="journal article" date="2002" name="Plant Cell">
        <title>Mutations in the Dof zinc finger genes DAG2 and DAG1 influence with opposite effects the germination of Arabidopsis seeds.</title>
        <authorList>
            <person name="Gualberti G."/>
            <person name="Papi M."/>
            <person name="Bellucci L."/>
            <person name="Ricci I."/>
            <person name="Bouchez D."/>
            <person name="Camilleri C."/>
            <person name="Costantino P."/>
            <person name="Vittorioso P."/>
        </authorList>
    </citation>
    <scope>NUCLEOTIDE SEQUENCE [GENOMIC DNA] (ISOFORM 1)</scope>
    <source>
        <strain>cv. Columbia</strain>
    </source>
</reference>
<reference key="2">
    <citation type="journal article" date="1999" name="Nature">
        <title>Sequence and analysis of chromosome 2 of the plant Arabidopsis thaliana.</title>
        <authorList>
            <person name="Lin X."/>
            <person name="Kaul S."/>
            <person name="Rounsley S.D."/>
            <person name="Shea T.P."/>
            <person name="Benito M.-I."/>
            <person name="Town C.D."/>
            <person name="Fujii C.Y."/>
            <person name="Mason T.M."/>
            <person name="Bowman C.L."/>
            <person name="Barnstead M.E."/>
            <person name="Feldblyum T.V."/>
            <person name="Buell C.R."/>
            <person name="Ketchum K.A."/>
            <person name="Lee J.J."/>
            <person name="Ronning C.M."/>
            <person name="Koo H.L."/>
            <person name="Moffat K.S."/>
            <person name="Cronin L.A."/>
            <person name="Shen M."/>
            <person name="Pai G."/>
            <person name="Van Aken S."/>
            <person name="Umayam L."/>
            <person name="Tallon L.J."/>
            <person name="Gill J.E."/>
            <person name="Adams M.D."/>
            <person name="Carrera A.J."/>
            <person name="Creasy T.H."/>
            <person name="Goodman H.M."/>
            <person name="Somerville C.R."/>
            <person name="Copenhaver G.P."/>
            <person name="Preuss D."/>
            <person name="Nierman W.C."/>
            <person name="White O."/>
            <person name="Eisen J.A."/>
            <person name="Salzberg S.L."/>
            <person name="Fraser C.M."/>
            <person name="Venter J.C."/>
        </authorList>
    </citation>
    <scope>NUCLEOTIDE SEQUENCE [LARGE SCALE GENOMIC DNA]</scope>
    <source>
        <strain>cv. Columbia</strain>
    </source>
</reference>
<reference key="3">
    <citation type="journal article" date="2017" name="Plant J.">
        <title>Araport11: a complete reannotation of the Arabidopsis thaliana reference genome.</title>
        <authorList>
            <person name="Cheng C.Y."/>
            <person name="Krishnakumar V."/>
            <person name="Chan A.P."/>
            <person name="Thibaud-Nissen F."/>
            <person name="Schobel S."/>
            <person name="Town C.D."/>
        </authorList>
    </citation>
    <scope>GENOME REANNOTATION</scope>
    <source>
        <strain>cv. Columbia</strain>
    </source>
</reference>
<reference key="4">
    <citation type="journal article" date="2003" name="Science">
        <title>Empirical analysis of transcriptional activity in the Arabidopsis genome.</title>
        <authorList>
            <person name="Yamada K."/>
            <person name="Lim J."/>
            <person name="Dale J.M."/>
            <person name="Chen H."/>
            <person name="Shinn P."/>
            <person name="Palm C.J."/>
            <person name="Southwick A.M."/>
            <person name="Wu H.C."/>
            <person name="Kim C.J."/>
            <person name="Nguyen M."/>
            <person name="Pham P.K."/>
            <person name="Cheuk R.F."/>
            <person name="Karlin-Newmann G."/>
            <person name="Liu S.X."/>
            <person name="Lam B."/>
            <person name="Sakano H."/>
            <person name="Wu T."/>
            <person name="Yu G."/>
            <person name="Miranda M."/>
            <person name="Quach H.L."/>
            <person name="Tripp M."/>
            <person name="Chang C.H."/>
            <person name="Lee J.M."/>
            <person name="Toriumi M.J."/>
            <person name="Chan M.M."/>
            <person name="Tang C.C."/>
            <person name="Onodera C.S."/>
            <person name="Deng J.M."/>
            <person name="Akiyama K."/>
            <person name="Ansari Y."/>
            <person name="Arakawa T."/>
            <person name="Banh J."/>
            <person name="Banno F."/>
            <person name="Bowser L."/>
            <person name="Brooks S.Y."/>
            <person name="Carninci P."/>
            <person name="Chao Q."/>
            <person name="Choy N."/>
            <person name="Enju A."/>
            <person name="Goldsmith A.D."/>
            <person name="Gurjal M."/>
            <person name="Hansen N.F."/>
            <person name="Hayashizaki Y."/>
            <person name="Johnson-Hopson C."/>
            <person name="Hsuan V.W."/>
            <person name="Iida K."/>
            <person name="Karnes M."/>
            <person name="Khan S."/>
            <person name="Koesema E."/>
            <person name="Ishida J."/>
            <person name="Jiang P.X."/>
            <person name="Jones T."/>
            <person name="Kawai J."/>
            <person name="Kamiya A."/>
            <person name="Meyers C."/>
            <person name="Nakajima M."/>
            <person name="Narusaka M."/>
            <person name="Seki M."/>
            <person name="Sakurai T."/>
            <person name="Satou M."/>
            <person name="Tamse R."/>
            <person name="Vaysberg M."/>
            <person name="Wallender E.K."/>
            <person name="Wong C."/>
            <person name="Yamamura Y."/>
            <person name="Yuan S."/>
            <person name="Shinozaki K."/>
            <person name="Davis R.W."/>
            <person name="Theologis A."/>
            <person name="Ecker J.R."/>
        </authorList>
    </citation>
    <scope>NUCLEOTIDE SEQUENCE [LARGE SCALE MRNA] (ISOFORM 2)</scope>
    <source>
        <strain>cv. Columbia</strain>
    </source>
</reference>
<reference key="5">
    <citation type="journal article" date="2002" name="Trends Plant Sci.">
        <title>The Dof family of plant transcription factors.</title>
        <authorList>
            <person name="Yanagisawa S."/>
        </authorList>
    </citation>
    <scope>GENE FAMILY</scope>
    <scope>NOMENCLATURE</scope>
</reference>
<dbReference type="EMBL" id="AJ237810">
    <property type="protein sequence ID" value="CAC36939.1"/>
    <property type="molecule type" value="Genomic_DNA"/>
</dbReference>
<dbReference type="EMBL" id="AJ237811">
    <property type="protein sequence ID" value="CAC36940.1"/>
    <property type="molecule type" value="mRNA"/>
</dbReference>
<dbReference type="EMBL" id="AC006418">
    <property type="protein sequence ID" value="AAD20169.1"/>
    <property type="status" value="ALT_SEQ"/>
    <property type="molecule type" value="Genomic_DNA"/>
</dbReference>
<dbReference type="EMBL" id="CP002685">
    <property type="protein sequence ID" value="AEC10725.1"/>
    <property type="molecule type" value="Genomic_DNA"/>
</dbReference>
<dbReference type="EMBL" id="CP002685">
    <property type="protein sequence ID" value="AEC10726.1"/>
    <property type="molecule type" value="Genomic_DNA"/>
</dbReference>
<dbReference type="EMBL" id="BT003328">
    <property type="protein sequence ID" value="AAO29947.1"/>
    <property type="molecule type" value="mRNA"/>
</dbReference>
<dbReference type="EMBL" id="BT008842">
    <property type="protein sequence ID" value="AAP68281.1"/>
    <property type="molecule type" value="mRNA"/>
</dbReference>
<dbReference type="PIR" id="G84904">
    <property type="entry name" value="G84904"/>
</dbReference>
<dbReference type="RefSeq" id="NP_001031549.1">
    <molecule id="Q9ZPY0-1"/>
    <property type="nucleotide sequence ID" value="NM_001036472.2"/>
</dbReference>
<dbReference type="RefSeq" id="NP_182182.2">
    <molecule id="Q9ZPY0-2"/>
    <property type="nucleotide sequence ID" value="NM_130224.8"/>
</dbReference>
<dbReference type="FunCoup" id="Q9ZPY0">
    <property type="interactions" value="200"/>
</dbReference>
<dbReference type="STRING" id="3702.Q9ZPY0"/>
<dbReference type="PaxDb" id="3702-AT2G46590.2"/>
<dbReference type="ProteomicsDB" id="222110">
    <molecule id="Q9ZPY0-1"/>
</dbReference>
<dbReference type="EnsemblPlants" id="AT2G46590.1">
    <molecule id="Q9ZPY0-2"/>
    <property type="protein sequence ID" value="AT2G46590.1"/>
    <property type="gene ID" value="AT2G46590"/>
</dbReference>
<dbReference type="EnsemblPlants" id="AT2G46590.2">
    <molecule id="Q9ZPY0-1"/>
    <property type="protein sequence ID" value="AT2G46590.2"/>
    <property type="gene ID" value="AT2G46590"/>
</dbReference>
<dbReference type="GeneID" id="819271"/>
<dbReference type="Gramene" id="AT2G46590.1">
    <molecule id="Q9ZPY0-2"/>
    <property type="protein sequence ID" value="AT2G46590.1"/>
    <property type="gene ID" value="AT2G46590"/>
</dbReference>
<dbReference type="Gramene" id="AT2G46590.2">
    <molecule id="Q9ZPY0-1"/>
    <property type="protein sequence ID" value="AT2G46590.2"/>
    <property type="gene ID" value="AT2G46590"/>
</dbReference>
<dbReference type="KEGG" id="ath:AT2G46590"/>
<dbReference type="Araport" id="AT2G46590"/>
<dbReference type="TAIR" id="AT2G46590">
    <property type="gene designation" value="DAG2"/>
</dbReference>
<dbReference type="eggNOG" id="ENOG502REBY">
    <property type="taxonomic scope" value="Eukaryota"/>
</dbReference>
<dbReference type="HOGENOM" id="CLU_036438_5_1_1"/>
<dbReference type="InParanoid" id="Q9ZPY0"/>
<dbReference type="OMA" id="MIGEGTW"/>
<dbReference type="PhylomeDB" id="Q9ZPY0"/>
<dbReference type="PRO" id="PR:Q9ZPY0"/>
<dbReference type="Proteomes" id="UP000006548">
    <property type="component" value="Chromosome 2"/>
</dbReference>
<dbReference type="ExpressionAtlas" id="Q9ZPY0">
    <property type="expression patterns" value="baseline and differential"/>
</dbReference>
<dbReference type="GO" id="GO:0005634">
    <property type="term" value="C:nucleus"/>
    <property type="evidence" value="ECO:0007669"/>
    <property type="project" value="UniProtKB-SubCell"/>
</dbReference>
<dbReference type="GO" id="GO:0003677">
    <property type="term" value="F:DNA binding"/>
    <property type="evidence" value="ECO:0007669"/>
    <property type="project" value="UniProtKB-KW"/>
</dbReference>
<dbReference type="GO" id="GO:0003700">
    <property type="term" value="F:DNA-binding transcription factor activity"/>
    <property type="evidence" value="ECO:0000250"/>
    <property type="project" value="TAIR"/>
</dbReference>
<dbReference type="GO" id="GO:0008270">
    <property type="term" value="F:zinc ion binding"/>
    <property type="evidence" value="ECO:0007669"/>
    <property type="project" value="UniProtKB-KW"/>
</dbReference>
<dbReference type="GO" id="GO:0071491">
    <property type="term" value="P:cellular response to red light"/>
    <property type="evidence" value="ECO:0000270"/>
    <property type="project" value="TAIR"/>
</dbReference>
<dbReference type="GO" id="GO:0071462">
    <property type="term" value="P:cellular response to water stimulus"/>
    <property type="evidence" value="ECO:0000270"/>
    <property type="project" value="TAIR"/>
</dbReference>
<dbReference type="GO" id="GO:0010372">
    <property type="term" value="P:positive regulation of gibberellin biosynthetic process"/>
    <property type="evidence" value="ECO:0000315"/>
    <property type="project" value="TAIR"/>
</dbReference>
<dbReference type="GO" id="GO:0010030">
    <property type="term" value="P:positive regulation of seed germination"/>
    <property type="evidence" value="ECO:0000315"/>
    <property type="project" value="TAIR"/>
</dbReference>
<dbReference type="GO" id="GO:0010161">
    <property type="term" value="P:red light signaling pathway"/>
    <property type="evidence" value="ECO:0000315"/>
    <property type="project" value="TAIR"/>
</dbReference>
<dbReference type="GO" id="GO:0009409">
    <property type="term" value="P:response to cold"/>
    <property type="evidence" value="ECO:0000315"/>
    <property type="project" value="TAIR"/>
</dbReference>
<dbReference type="GO" id="GO:0009416">
    <property type="term" value="P:response to light stimulus"/>
    <property type="evidence" value="ECO:0000315"/>
    <property type="project" value="TAIR"/>
</dbReference>
<dbReference type="GO" id="GO:0009845">
    <property type="term" value="P:seed germination"/>
    <property type="evidence" value="ECO:0000315"/>
    <property type="project" value="TAIR"/>
</dbReference>
<dbReference type="InterPro" id="IPR045174">
    <property type="entry name" value="Dof"/>
</dbReference>
<dbReference type="InterPro" id="IPR003851">
    <property type="entry name" value="Znf_Dof"/>
</dbReference>
<dbReference type="PANTHER" id="PTHR31992">
    <property type="entry name" value="DOF ZINC FINGER PROTEIN DOF1.4-RELATED"/>
    <property type="match status" value="1"/>
</dbReference>
<dbReference type="PANTHER" id="PTHR31992:SF182">
    <property type="entry name" value="DOF ZINC FINGER PROTEIN DOF2.5"/>
    <property type="match status" value="1"/>
</dbReference>
<dbReference type="Pfam" id="PF02701">
    <property type="entry name" value="Zn_ribbon_Dof"/>
    <property type="match status" value="1"/>
</dbReference>
<dbReference type="PROSITE" id="PS01361">
    <property type="entry name" value="ZF_DOF_1"/>
    <property type="match status" value="1"/>
</dbReference>
<dbReference type="PROSITE" id="PS50884">
    <property type="entry name" value="ZF_DOF_2"/>
    <property type="match status" value="1"/>
</dbReference>
<accession>Q9ZPY0</accession>
<accession>Q84WI6</accession>
<accession>Q9AR20</accession>
<feature type="chain" id="PRO_0000074276" description="Dof zinc finger protein DOF2.5">
    <location>
        <begin position="1"/>
        <end position="369"/>
    </location>
</feature>
<feature type="zinc finger region" description="Dof-type" evidence="1">
    <location>
        <begin position="80"/>
        <end position="134"/>
    </location>
</feature>
<feature type="region of interest" description="Disordered" evidence="2">
    <location>
        <begin position="120"/>
        <end position="149"/>
    </location>
</feature>
<feature type="region of interest" description="Disordered" evidence="2">
    <location>
        <begin position="203"/>
        <end position="224"/>
    </location>
</feature>
<feature type="region of interest" description="Disordered" evidence="2">
    <location>
        <begin position="284"/>
        <end position="304"/>
    </location>
</feature>
<feature type="region of interest" description="Disordered" evidence="2">
    <location>
        <begin position="322"/>
        <end position="369"/>
    </location>
</feature>
<feature type="compositionally biased region" description="Low complexity" evidence="2">
    <location>
        <begin position="214"/>
        <end position="224"/>
    </location>
</feature>
<feature type="compositionally biased region" description="Polar residues" evidence="2">
    <location>
        <begin position="284"/>
        <end position="297"/>
    </location>
</feature>
<feature type="compositionally biased region" description="Low complexity" evidence="2">
    <location>
        <begin position="342"/>
        <end position="362"/>
    </location>
</feature>
<feature type="binding site" evidence="1">
    <location>
        <position position="82"/>
    </location>
    <ligand>
        <name>Zn(2+)</name>
        <dbReference type="ChEBI" id="CHEBI:29105"/>
    </ligand>
</feature>
<feature type="binding site" evidence="1">
    <location>
        <position position="85"/>
    </location>
    <ligand>
        <name>Zn(2+)</name>
        <dbReference type="ChEBI" id="CHEBI:29105"/>
    </ligand>
</feature>
<feature type="binding site" evidence="1">
    <location>
        <position position="107"/>
    </location>
    <ligand>
        <name>Zn(2+)</name>
        <dbReference type="ChEBI" id="CHEBI:29105"/>
    </ligand>
</feature>
<feature type="binding site" evidence="1">
    <location>
        <position position="110"/>
    </location>
    <ligand>
        <name>Zn(2+)</name>
        <dbReference type="ChEBI" id="CHEBI:29105"/>
    </ligand>
</feature>
<feature type="splice variant" id="VSP_011775" description="In isoform 2." evidence="3">
    <location>
        <begin position="1"/>
        <end position="12"/>
    </location>
</feature>
<feature type="sequence conflict" description="In Ref. 1; CAC36939/CAC36940." evidence="4" ref="1">
    <original>F</original>
    <variation>L</variation>
    <location>
        <position position="10"/>
    </location>
</feature>
<proteinExistence type="evidence at transcript level"/>
<organism>
    <name type="scientific">Arabidopsis thaliana</name>
    <name type="common">Mouse-ear cress</name>
    <dbReference type="NCBI Taxonomy" id="3702"/>
    <lineage>
        <taxon>Eukaryota</taxon>
        <taxon>Viridiplantae</taxon>
        <taxon>Streptophyta</taxon>
        <taxon>Embryophyta</taxon>
        <taxon>Tracheophyta</taxon>
        <taxon>Spermatophyta</taxon>
        <taxon>Magnoliopsida</taxon>
        <taxon>eudicotyledons</taxon>
        <taxon>Gunneridae</taxon>
        <taxon>Pentapetalae</taxon>
        <taxon>rosids</taxon>
        <taxon>malvids</taxon>
        <taxon>Brassicales</taxon>
        <taxon>Brassicaceae</taxon>
        <taxon>Camelineae</taxon>
        <taxon>Arabidopsis</taxon>
    </lineage>
</organism>
<keyword id="KW-0025">Alternative splicing</keyword>
<keyword id="KW-0238">DNA-binding</keyword>
<keyword id="KW-0309">Germination</keyword>
<keyword id="KW-0479">Metal-binding</keyword>
<keyword id="KW-0539">Nucleus</keyword>
<keyword id="KW-1185">Reference proteome</keyword>
<keyword id="KW-0804">Transcription</keyword>
<keyword id="KW-0805">Transcription regulation</keyword>
<keyword id="KW-0862">Zinc</keyword>
<keyword id="KW-0863">Zinc-finger</keyword>
<name>DOF25_ARATH</name>
<protein>
    <recommendedName>
        <fullName>Dof zinc finger protein DOF2.5</fullName>
        <shortName>AtDOF2.5</shortName>
    </recommendedName>
    <alternativeName>
        <fullName>Dof affecting germination 2</fullName>
    </alternativeName>
</protein>
<comment type="function">
    <text>Transcription factor specifically involved in the maternal control of seed germination. Regulates transcription by binding to a 5'-AA[AG]G-3' consensus core sequence. May ensure the activation of a component that would trigger germination as a consequence of red light perception.</text>
</comment>
<comment type="subcellular location">
    <subcellularLocation>
        <location evidence="4">Nucleus</location>
    </subcellularLocation>
</comment>
<comment type="alternative products">
    <event type="alternative splicing"/>
    <isoform>
        <id>Q9ZPY0-1</id>
        <name>1</name>
        <sequence type="displayed"/>
    </isoform>
    <isoform>
        <id>Q9ZPY0-2</id>
        <name>2</name>
        <sequence type="described" ref="VSP_011775"/>
    </isoform>
</comment>
<comment type="tissue specificity">
    <text>Expressed in the vascular system of the mother plant, but not present in the seed and embryo. In maturing siliques, found all through the funiculus connecting the placenta to the ovule, but not in the ovule.</text>
</comment>
<comment type="developmental stage">
    <text>Turned off in siliques when they reached full maturation. Not expressed in developing or mature embryos.</text>
</comment>
<comment type="miscellaneous">
    <text>The regulatory role of DOF2.5/DAG2 appears to be opposite to that of DOF3.7/DAG1. Both zinc finger proteins may act on a maternal switch that controls seed germination, possibly by regulating the same gene(s).</text>
</comment>
<comment type="miscellaneous">
    <molecule>Isoform 2</molecule>
    <text evidence="4">May be due to an intron retention.</text>
</comment>
<comment type="sequence caution" evidence="4">
    <conflict type="erroneous gene model prediction">
        <sequence resource="EMBL-CDS" id="AAD20169"/>
    </conflict>
</comment>
<sequence length="369" mass="40537">MDATKWTQGFQEMMNVKPMEQIMIPNNNTHQPNTTSNARPNTILTSNGVSTAGATVSGVSNNNNNTAVVAERKARPQEKLNCPRCNSTNTKFCYYNNYSLTQPRYFCKGCRRYWTEGGSLRNVPVGGSSRKNKRSSSSSSSNILQTIPSSLPDLNPPILFSNQIHNKSKGSSQDLNLLSFPVMQDQHHHHVHMSQFLQMPKMEGNGNITHQQQPSSSSSVYGSSSSPVSALELLRTGVNVSSRSGINSSFMPSGSMMDSNTVLYTSSGFPTMVDYKPSNLSFSTDHQGLGHNSNNRSEALHSDHHQQGRVLFPFGDQMKELSSSITQEVDHDDNQQQKSHGNNNNNNNSSPNNGYWSGMFSTTGGGSSW</sequence>
<evidence type="ECO:0000255" key="1">
    <source>
        <dbReference type="PROSITE-ProRule" id="PRU00071"/>
    </source>
</evidence>
<evidence type="ECO:0000256" key="2">
    <source>
        <dbReference type="SAM" id="MobiDB-lite"/>
    </source>
</evidence>
<evidence type="ECO:0000303" key="3">
    <source>
    </source>
</evidence>
<evidence type="ECO:0000305" key="4"/>
<gene>
    <name type="primary">DOF2.5</name>
    <name type="synonym">DAG2</name>
    <name type="ordered locus">At2g46590</name>
    <name type="ORF">F13A10.12</name>
</gene>